<gene>
    <name evidence="1" type="primary">gcvPB</name>
    <name type="ordered locus">THA_183</name>
</gene>
<organism>
    <name type="scientific">Thermosipho africanus (strain TCF52B)</name>
    <dbReference type="NCBI Taxonomy" id="484019"/>
    <lineage>
        <taxon>Bacteria</taxon>
        <taxon>Thermotogati</taxon>
        <taxon>Thermotogota</taxon>
        <taxon>Thermotogae</taxon>
        <taxon>Thermotogales</taxon>
        <taxon>Fervidobacteriaceae</taxon>
        <taxon>Thermosipho</taxon>
    </lineage>
</organism>
<comment type="function">
    <text evidence="1">The glycine cleavage system catalyzes the degradation of glycine. The P protein binds the alpha-amino group of glycine through its pyridoxal phosphate cofactor; CO(2) is released and the remaining methylamine moiety is then transferred to the lipoamide cofactor of the H protein.</text>
</comment>
<comment type="catalytic activity">
    <reaction evidence="1">
        <text>N(6)-[(R)-lipoyl]-L-lysyl-[glycine-cleavage complex H protein] + glycine + H(+) = N(6)-[(R)-S(8)-aminomethyldihydrolipoyl]-L-lysyl-[glycine-cleavage complex H protein] + CO2</text>
        <dbReference type="Rhea" id="RHEA:24304"/>
        <dbReference type="Rhea" id="RHEA-COMP:10494"/>
        <dbReference type="Rhea" id="RHEA-COMP:10495"/>
        <dbReference type="ChEBI" id="CHEBI:15378"/>
        <dbReference type="ChEBI" id="CHEBI:16526"/>
        <dbReference type="ChEBI" id="CHEBI:57305"/>
        <dbReference type="ChEBI" id="CHEBI:83099"/>
        <dbReference type="ChEBI" id="CHEBI:83143"/>
        <dbReference type="EC" id="1.4.4.2"/>
    </reaction>
</comment>
<comment type="cofactor">
    <cofactor evidence="1">
        <name>pyridoxal 5'-phosphate</name>
        <dbReference type="ChEBI" id="CHEBI:597326"/>
    </cofactor>
</comment>
<comment type="subunit">
    <text evidence="1">The glycine cleavage system is composed of four proteins: P, T, L and H. In this organism, the P 'protein' is a heterodimer of two subunits.</text>
</comment>
<comment type="similarity">
    <text evidence="1">Belongs to the GcvP family. C-terminal subunit subfamily.</text>
</comment>
<proteinExistence type="inferred from homology"/>
<name>GCSPB_THEAB</name>
<reference key="1">
    <citation type="journal article" date="2009" name="J. Bacteriol.">
        <title>The genome of Thermosipho africanus TCF52B: lateral genetic connections to the Firmicutes and Archaea.</title>
        <authorList>
            <person name="Nesboe C.L."/>
            <person name="Bapteste E."/>
            <person name="Curtis B."/>
            <person name="Dahle H."/>
            <person name="Lopez P."/>
            <person name="Macleod D."/>
            <person name="Dlutek M."/>
            <person name="Bowman S."/>
            <person name="Zhaxybayeva O."/>
            <person name="Birkeland N.-K."/>
            <person name="Doolittle W.F."/>
        </authorList>
    </citation>
    <scope>NUCLEOTIDE SEQUENCE [LARGE SCALE GENOMIC DNA]</scope>
    <source>
        <strain>TCF52B</strain>
    </source>
</reference>
<feature type="chain" id="PRO_1000132505" description="Probable glycine dehydrogenase (decarboxylating) subunit 2">
    <location>
        <begin position="1"/>
        <end position="480"/>
    </location>
</feature>
<feature type="modified residue" description="N6-(pyridoxal phosphate)lysine" evidence="1">
    <location>
        <position position="265"/>
    </location>
</feature>
<sequence length="480" mass="53775">MTIFEISKEGRIGFQLPDNNIKDYEINLPEHLLRKSLPRLPQVSEVDVVRHYTNLSAKNYSVDVGFYPLGSCTMKYNPKVNEKVASFEEFSMIHPFQPHETVQGALKLMYDLKEMLCEITGMDDMTLIPSAGAHGELTGILISRAYHLSRGDTKRTKVIVPDSAHGTNPASARMAGFDVIEIKSGPDGRVDLNELEKVLDETVAVIMLTNPNTLGLFEKDILKIAQMAHDKGALLYYDGANLNAILGRTRPGDMGFDIVHLNLHKTFSTPHGMGGPGSGPVGVKKHLAKFLPVPEIVKIEDKYTLNYNKPESIGFIRSYFGNFSVMVRAYTYIKTMGKDGLKKAGEMAVLNANYLRVKVSKIMDIAYPGICMHEFVSTCEKLTKETGVKALDIAKRLLDYGIHAPTMYFPLIVHEDFMIEPTETESKDTLDKFAQILEKIFNEARENPELVKGAPYNTPVRRLDDVSASRKPVFKYNFEE</sequence>
<keyword id="KW-0560">Oxidoreductase</keyword>
<keyword id="KW-0663">Pyridoxal phosphate</keyword>
<keyword id="KW-1185">Reference proteome</keyword>
<evidence type="ECO:0000255" key="1">
    <source>
        <dbReference type="HAMAP-Rule" id="MF_00713"/>
    </source>
</evidence>
<accession>B7IF24</accession>
<protein>
    <recommendedName>
        <fullName evidence="1">Probable glycine dehydrogenase (decarboxylating) subunit 2</fullName>
        <ecNumber evidence="1">1.4.4.2</ecNumber>
    </recommendedName>
    <alternativeName>
        <fullName evidence="1">Glycine cleavage system P-protein subunit 2</fullName>
    </alternativeName>
    <alternativeName>
        <fullName evidence="1">Glycine decarboxylase subunit 2</fullName>
    </alternativeName>
    <alternativeName>
        <fullName evidence="1">Glycine dehydrogenase (aminomethyl-transferring) subunit 2</fullName>
    </alternativeName>
</protein>
<dbReference type="EC" id="1.4.4.2" evidence="1"/>
<dbReference type="EMBL" id="CP001185">
    <property type="protein sequence ID" value="ACJ74688.1"/>
    <property type="molecule type" value="Genomic_DNA"/>
</dbReference>
<dbReference type="RefSeq" id="WP_012579397.1">
    <property type="nucleotide sequence ID" value="NC_011653.1"/>
</dbReference>
<dbReference type="SMR" id="B7IF24"/>
<dbReference type="STRING" id="484019.THA_183"/>
<dbReference type="KEGG" id="taf:THA_183"/>
<dbReference type="eggNOG" id="COG1003">
    <property type="taxonomic scope" value="Bacteria"/>
</dbReference>
<dbReference type="HOGENOM" id="CLU_004620_5_0_0"/>
<dbReference type="OrthoDB" id="9801272at2"/>
<dbReference type="Proteomes" id="UP000002453">
    <property type="component" value="Chromosome"/>
</dbReference>
<dbReference type="GO" id="GO:0005829">
    <property type="term" value="C:cytosol"/>
    <property type="evidence" value="ECO:0007669"/>
    <property type="project" value="TreeGrafter"/>
</dbReference>
<dbReference type="GO" id="GO:0005960">
    <property type="term" value="C:glycine cleavage complex"/>
    <property type="evidence" value="ECO:0007669"/>
    <property type="project" value="TreeGrafter"/>
</dbReference>
<dbReference type="GO" id="GO:0016594">
    <property type="term" value="F:glycine binding"/>
    <property type="evidence" value="ECO:0007669"/>
    <property type="project" value="TreeGrafter"/>
</dbReference>
<dbReference type="GO" id="GO:0004375">
    <property type="term" value="F:glycine dehydrogenase (decarboxylating) activity"/>
    <property type="evidence" value="ECO:0007669"/>
    <property type="project" value="UniProtKB-EC"/>
</dbReference>
<dbReference type="GO" id="GO:0030170">
    <property type="term" value="F:pyridoxal phosphate binding"/>
    <property type="evidence" value="ECO:0007669"/>
    <property type="project" value="TreeGrafter"/>
</dbReference>
<dbReference type="GO" id="GO:0019464">
    <property type="term" value="P:glycine decarboxylation via glycine cleavage system"/>
    <property type="evidence" value="ECO:0007669"/>
    <property type="project" value="UniProtKB-UniRule"/>
</dbReference>
<dbReference type="CDD" id="cd00613">
    <property type="entry name" value="GDC-P"/>
    <property type="match status" value="1"/>
</dbReference>
<dbReference type="FunFam" id="3.40.640.10:FF:000034">
    <property type="entry name" value="Probable glycine dehydrogenase (decarboxylating) subunit 2"/>
    <property type="match status" value="1"/>
</dbReference>
<dbReference type="FunFam" id="3.90.1150.10:FF:000014">
    <property type="entry name" value="Probable glycine dehydrogenase (decarboxylating) subunit 2"/>
    <property type="match status" value="1"/>
</dbReference>
<dbReference type="Gene3D" id="6.20.440.10">
    <property type="match status" value="1"/>
</dbReference>
<dbReference type="Gene3D" id="3.90.1150.10">
    <property type="entry name" value="Aspartate Aminotransferase, domain 1"/>
    <property type="match status" value="1"/>
</dbReference>
<dbReference type="Gene3D" id="3.40.640.10">
    <property type="entry name" value="Type I PLP-dependent aspartate aminotransferase-like (Major domain)"/>
    <property type="match status" value="1"/>
</dbReference>
<dbReference type="HAMAP" id="MF_00713">
    <property type="entry name" value="GcvPB"/>
    <property type="match status" value="1"/>
</dbReference>
<dbReference type="InterPro" id="IPR023012">
    <property type="entry name" value="GcvPB"/>
</dbReference>
<dbReference type="InterPro" id="IPR049316">
    <property type="entry name" value="GDC-P_C"/>
</dbReference>
<dbReference type="InterPro" id="IPR049315">
    <property type="entry name" value="GDC-P_N"/>
</dbReference>
<dbReference type="InterPro" id="IPR020581">
    <property type="entry name" value="GDC_P"/>
</dbReference>
<dbReference type="InterPro" id="IPR015424">
    <property type="entry name" value="PyrdxlP-dep_Trfase"/>
</dbReference>
<dbReference type="InterPro" id="IPR015421">
    <property type="entry name" value="PyrdxlP-dep_Trfase_major"/>
</dbReference>
<dbReference type="InterPro" id="IPR015422">
    <property type="entry name" value="PyrdxlP-dep_Trfase_small"/>
</dbReference>
<dbReference type="NCBIfam" id="NF003346">
    <property type="entry name" value="PRK04366.1"/>
    <property type="match status" value="1"/>
</dbReference>
<dbReference type="PANTHER" id="PTHR11773:SF1">
    <property type="entry name" value="GLYCINE DEHYDROGENASE (DECARBOXYLATING), MITOCHONDRIAL"/>
    <property type="match status" value="1"/>
</dbReference>
<dbReference type="PANTHER" id="PTHR11773">
    <property type="entry name" value="GLYCINE DEHYDROGENASE, DECARBOXYLATING"/>
    <property type="match status" value="1"/>
</dbReference>
<dbReference type="Pfam" id="PF21478">
    <property type="entry name" value="GcvP2_C"/>
    <property type="match status" value="1"/>
</dbReference>
<dbReference type="Pfam" id="PF02347">
    <property type="entry name" value="GDC-P"/>
    <property type="match status" value="1"/>
</dbReference>
<dbReference type="SUPFAM" id="SSF53383">
    <property type="entry name" value="PLP-dependent transferases"/>
    <property type="match status" value="1"/>
</dbReference>